<comment type="function">
    <text evidence="1">May play a role in triacylglycerol packaging into adipocytes. May function as a coat protein involved in the biogenesis of lipid droplets (By similarity).</text>
</comment>
<comment type="subcellular location">
    <subcellularLocation>
        <location evidence="2">Cell membrane</location>
    </subcellularLocation>
    <subcellularLocation>
        <location evidence="2">Cytoplasm</location>
    </subcellularLocation>
    <subcellularLocation>
        <location evidence="2">Lipid droplet</location>
    </subcellularLocation>
    <text evidence="2">Nascent lipid droplet surface-associated; association with lipid droplets is triacylglycerol synthesis-dependent.</text>
</comment>
<comment type="induction">
    <text evidence="5">Up-regulated during adipocyte differentiation.</text>
</comment>
<comment type="disease" evidence="6 7 8">
    <disease id="DI-06732">
        <name>Myopathy with rimmed ubiquitin-positive autophagic vacuolation, autosomal dominant</name>
        <acronym>MRUPAV</acronym>
        <description>An autosomal dominant, slowly progressive myopathy characterized by skeletal muscle weakness variably affecting the distal or proximal lower limbs. Some patients may also have upper limb involvement or neck muscle weakness. Skeletal muscle biopsy shows distinctive myopathic features including rimmed ubiquitin-positive autophagic vacuolation and abnormal subsarcolemmal protein aggregation.</description>
        <dbReference type="MIM" id="601846"/>
    </disease>
    <text evidence="6 7 8">The disease is caused by variants affecting the gene represented in this entry. Disease causing variants are heterozygous expansions of a 99-bp repetitive sequence in exon 3. Normal repeat number is 29 to 31, whereas pathogenic repeats range from 39 to 50. A higher number of repeats may be associated with earlier age at disease onset, more severe phenotypes, and faster disease progression.</text>
</comment>
<comment type="similarity">
    <text evidence="10">Belongs to the perilipin family.</text>
</comment>
<keyword id="KW-1003">Cell membrane</keyword>
<keyword id="KW-0963">Cytoplasm</keyword>
<keyword id="KW-0551">Lipid droplet</keyword>
<keyword id="KW-0472">Membrane</keyword>
<keyword id="KW-0597">Phosphoprotein</keyword>
<keyword id="KW-1267">Proteomics identification</keyword>
<keyword id="KW-1185">Reference proteome</keyword>
<keyword id="KW-0677">Repeat</keyword>
<name>PLIN4_HUMAN</name>
<organism>
    <name type="scientific">Homo sapiens</name>
    <name type="common">Human</name>
    <dbReference type="NCBI Taxonomy" id="9606"/>
    <lineage>
        <taxon>Eukaryota</taxon>
        <taxon>Metazoa</taxon>
        <taxon>Chordata</taxon>
        <taxon>Craniata</taxon>
        <taxon>Vertebrata</taxon>
        <taxon>Euteleostomi</taxon>
        <taxon>Mammalia</taxon>
        <taxon>Eutheria</taxon>
        <taxon>Euarchontoglires</taxon>
        <taxon>Primates</taxon>
        <taxon>Haplorrhini</taxon>
        <taxon>Catarrhini</taxon>
        <taxon>Hominidae</taxon>
        <taxon>Homo</taxon>
    </lineage>
</organism>
<reference key="1">
    <citation type="journal article" date="2004" name="Nature">
        <title>The DNA sequence and biology of human chromosome 19.</title>
        <authorList>
            <person name="Grimwood J."/>
            <person name="Gordon L.A."/>
            <person name="Olsen A.S."/>
            <person name="Terry A."/>
            <person name="Schmutz J."/>
            <person name="Lamerdin J.E."/>
            <person name="Hellsten U."/>
            <person name="Goodstein D."/>
            <person name="Couronne O."/>
            <person name="Tran-Gyamfi M."/>
            <person name="Aerts A."/>
            <person name="Altherr M."/>
            <person name="Ashworth L."/>
            <person name="Bajorek E."/>
            <person name="Black S."/>
            <person name="Branscomb E."/>
            <person name="Caenepeel S."/>
            <person name="Carrano A.V."/>
            <person name="Caoile C."/>
            <person name="Chan Y.M."/>
            <person name="Christensen M."/>
            <person name="Cleland C.A."/>
            <person name="Copeland A."/>
            <person name="Dalin E."/>
            <person name="Dehal P."/>
            <person name="Denys M."/>
            <person name="Detter J.C."/>
            <person name="Escobar J."/>
            <person name="Flowers D."/>
            <person name="Fotopulos D."/>
            <person name="Garcia C."/>
            <person name="Georgescu A.M."/>
            <person name="Glavina T."/>
            <person name="Gomez M."/>
            <person name="Gonzales E."/>
            <person name="Groza M."/>
            <person name="Hammon N."/>
            <person name="Hawkins T."/>
            <person name="Haydu L."/>
            <person name="Ho I."/>
            <person name="Huang W."/>
            <person name="Israni S."/>
            <person name="Jett J."/>
            <person name="Kadner K."/>
            <person name="Kimball H."/>
            <person name="Kobayashi A."/>
            <person name="Larionov V."/>
            <person name="Leem S.-H."/>
            <person name="Lopez F."/>
            <person name="Lou Y."/>
            <person name="Lowry S."/>
            <person name="Malfatti S."/>
            <person name="Martinez D."/>
            <person name="McCready P.M."/>
            <person name="Medina C."/>
            <person name="Morgan J."/>
            <person name="Nelson K."/>
            <person name="Nolan M."/>
            <person name="Ovcharenko I."/>
            <person name="Pitluck S."/>
            <person name="Pollard M."/>
            <person name="Popkie A.P."/>
            <person name="Predki P."/>
            <person name="Quan G."/>
            <person name="Ramirez L."/>
            <person name="Rash S."/>
            <person name="Retterer J."/>
            <person name="Rodriguez A."/>
            <person name="Rogers S."/>
            <person name="Salamov A."/>
            <person name="Salazar A."/>
            <person name="She X."/>
            <person name="Smith D."/>
            <person name="Slezak T."/>
            <person name="Solovyev V."/>
            <person name="Thayer N."/>
            <person name="Tice H."/>
            <person name="Tsai M."/>
            <person name="Ustaszewska A."/>
            <person name="Vo N."/>
            <person name="Wagner M."/>
            <person name="Wheeler J."/>
            <person name="Wu K."/>
            <person name="Xie G."/>
            <person name="Yang J."/>
            <person name="Dubchak I."/>
            <person name="Furey T.S."/>
            <person name="DeJong P."/>
            <person name="Dickson M."/>
            <person name="Gordon D."/>
            <person name="Eichler E.E."/>
            <person name="Pennacchio L.A."/>
            <person name="Richardson P."/>
            <person name="Stubbs L."/>
            <person name="Rokhsar D.S."/>
            <person name="Myers R.M."/>
            <person name="Rubin E.M."/>
            <person name="Lucas S.M."/>
        </authorList>
    </citation>
    <scope>NUCLEOTIDE SEQUENCE [LARGE SCALE GENOMIC DNA]</scope>
</reference>
<reference key="2">
    <citation type="journal article" date="2001" name="DNA Res.">
        <title>Prediction of the coding sequences of unidentified human genes. XXI. The complete sequences of 60 new cDNA clones from brain which code for large proteins.</title>
        <authorList>
            <person name="Nagase T."/>
            <person name="Kikuno R."/>
            <person name="Ohara O."/>
        </authorList>
    </citation>
    <scope>NUCLEOTIDE SEQUENCE [LARGE SCALE MRNA] OF 90-1371</scope>
    <scope>VARIANTS ALA-138; GLY-673; ASN-775; ASN-874 AND THR-1138</scope>
    <source>
        <tissue>Brain</tissue>
    </source>
</reference>
<reference key="3">
    <citation type="journal article" date="2004" name="Diabetes">
        <title>Adipose tissue expression of the lipid droplet-associating proteins S3-12 and perilipin is controlled by peroxisome proliferator-activated receptor-gamma.</title>
        <authorList>
            <person name="Dalen K.T."/>
            <person name="Schoonjans K."/>
            <person name="Ulven S.M."/>
            <person name="Weedon-Fekjaer M.S."/>
            <person name="Bentzen T.G."/>
            <person name="Koutnikova H."/>
            <person name="Auwerx J."/>
            <person name="Nebb H.I."/>
        </authorList>
    </citation>
    <scope>INDUCTION</scope>
</reference>
<reference key="4">
    <citation type="journal article" date="2014" name="J. Proteomics">
        <title>An enzyme assisted RP-RPLC approach for in-depth analysis of human liver phosphoproteome.</title>
        <authorList>
            <person name="Bian Y."/>
            <person name="Song C."/>
            <person name="Cheng K."/>
            <person name="Dong M."/>
            <person name="Wang F."/>
            <person name="Huang J."/>
            <person name="Sun D."/>
            <person name="Wang L."/>
            <person name="Ye M."/>
            <person name="Zou H."/>
        </authorList>
    </citation>
    <scope>IDENTIFICATION BY MASS SPECTROMETRY [LARGE SCALE ANALYSIS]</scope>
    <source>
        <tissue>Liver</tissue>
    </source>
</reference>
<reference key="5">
    <citation type="journal article" date="2020" name="Acta Neuropathol.">
        <title>Multiomic elucidation of a coding 99-mer repeat-expansion skeletal muscle disease.</title>
        <authorList>
            <person name="Ruggieri A."/>
            <person name="Naumenko S."/>
            <person name="Smith M.A."/>
            <person name="Iannibelli E."/>
            <person name="Blasevich F."/>
            <person name="Bragato C."/>
            <person name="Gibertini S."/>
            <person name="Barton K."/>
            <person name="Vorgerd M."/>
            <person name="Marcus K."/>
            <person name="Wang P."/>
            <person name="Maggi L."/>
            <person name="Mantegazza R."/>
            <person name="Dowling J.J."/>
            <person name="Kley R.A."/>
            <person name="Mora M."/>
            <person name="Minassian B.A."/>
        </authorList>
    </citation>
    <scope>INVOLVEMENT IN MRUPAV</scope>
</reference>
<reference key="6">
    <citation type="journal article" date="2022" name="Ann. Clin. Transl. Neurol.">
        <title>Subsarcolemmal and cytoplasmic p62 positivity and rimmed vacuoles are distinctive for PLIN4-myopathy.</title>
        <authorList>
            <person name="Wang Q."/>
            <person name="Yu M."/>
            <person name="Zhang W."/>
            <person name="Gang Q."/>
            <person name="Xie Z."/>
            <person name="Xu J."/>
            <person name="Zhou C."/>
            <person name="Wang D."/>
            <person name="Meng L."/>
            <person name="Lv H."/>
            <person name="Jia Z."/>
            <person name="Deng J."/>
            <person name="Yuan Y."/>
            <person name="Wang Z."/>
        </authorList>
    </citation>
    <scope>INVOLVEMENT IN MRUPAV</scope>
</reference>
<reference key="7">
    <citation type="journal article" date="2022" name="Acta Neuropathol.">
        <title>Expanding the phenotype and genotype spectra of PLIN4-associated myopathy with rimmed ubiquitin-positive autophagic vacuolation.</title>
        <authorList>
            <person name="Yang K."/>
            <person name="Zeng Y.H."/>
            <person name="Qiu Y.S."/>
            <person name="Lin F."/>
            <person name="Chen H.Z."/>
            <person name="Jin M."/>
            <person name="Chen L."/>
            <person name="Zheng F.Z."/>
            <person name="Ding Y.L."/>
            <person name="Cao C.Y."/>
            <person name="Lin M.T."/>
            <person name="Chen W.J."/>
            <person name="Wang Z.Q."/>
            <person name="Wang N."/>
        </authorList>
    </citation>
    <scope>INVOLVEMENT IN MRUPAV</scope>
</reference>
<gene>
    <name evidence="11" type="primary">PLIN4</name>
    <name evidence="9" type="synonym">KIAA1881</name>
</gene>
<proteinExistence type="evidence at protein level"/>
<protein>
    <recommendedName>
        <fullName evidence="10">Perilipin-4</fullName>
    </recommendedName>
    <alternativeName>
        <fullName>Adipocyte protein S3-12</fullName>
    </alternativeName>
</protein>
<evidence type="ECO:0000250" key="1"/>
<evidence type="ECO:0000250" key="2">
    <source>
        <dbReference type="UniProtKB" id="O88492"/>
    </source>
</evidence>
<evidence type="ECO:0000256" key="3">
    <source>
        <dbReference type="SAM" id="MobiDB-lite"/>
    </source>
</evidence>
<evidence type="ECO:0000269" key="4">
    <source>
    </source>
</evidence>
<evidence type="ECO:0000269" key="5">
    <source>
    </source>
</evidence>
<evidence type="ECO:0000269" key="6">
    <source>
    </source>
</evidence>
<evidence type="ECO:0000269" key="7">
    <source>
    </source>
</evidence>
<evidence type="ECO:0000269" key="8">
    <source>
    </source>
</evidence>
<evidence type="ECO:0000303" key="9">
    <source>
    </source>
</evidence>
<evidence type="ECO:0000305" key="10"/>
<evidence type="ECO:0000312" key="11">
    <source>
        <dbReference type="HGNC" id="HGNC:29393"/>
    </source>
</evidence>
<dbReference type="EMBL" id="AC011498">
    <property type="status" value="NOT_ANNOTATED_CDS"/>
    <property type="molecule type" value="Genomic_DNA"/>
</dbReference>
<dbReference type="EMBL" id="AB067468">
    <property type="protein sequence ID" value="BAB67774.1"/>
    <property type="molecule type" value="mRNA"/>
</dbReference>
<dbReference type="CCDS" id="CCDS92489.1"/>
<dbReference type="RefSeq" id="NP_001354797.1">
    <property type="nucleotide sequence ID" value="NM_001367868.2"/>
</dbReference>
<dbReference type="RefSeq" id="NP_001380819.1">
    <property type="nucleotide sequence ID" value="NM_001393890.1"/>
</dbReference>
<dbReference type="RefSeq" id="NP_001380820.1">
    <property type="nucleotide sequence ID" value="NM_001393891.1"/>
</dbReference>
<dbReference type="RefSeq" id="XP_006722931.1">
    <property type="nucleotide sequence ID" value="XM_006722868.3"/>
</dbReference>
<dbReference type="SMR" id="Q96Q06"/>
<dbReference type="BioGRID" id="609760">
    <property type="interactions" value="7"/>
</dbReference>
<dbReference type="FunCoup" id="Q96Q06">
    <property type="interactions" value="95"/>
</dbReference>
<dbReference type="IntAct" id="Q96Q06">
    <property type="interactions" value="4"/>
</dbReference>
<dbReference type="STRING" id="9606.ENSP00000488481"/>
<dbReference type="GlyConnect" id="2883">
    <property type="glycosylation" value="1 O-GlcNAc glycan (1 site)"/>
</dbReference>
<dbReference type="GlyCosmos" id="Q96Q06">
    <property type="glycosylation" value="8 sites, 1 glycan"/>
</dbReference>
<dbReference type="GlyGen" id="Q96Q06">
    <property type="glycosylation" value="2 sites, 1 O-linked glycan (1 site)"/>
</dbReference>
<dbReference type="iPTMnet" id="Q96Q06"/>
<dbReference type="PhosphoSitePlus" id="Q96Q06"/>
<dbReference type="BioMuta" id="PLIN4"/>
<dbReference type="DMDM" id="156630940"/>
<dbReference type="CPTAC" id="CPTAC-5849"/>
<dbReference type="CPTAC" id="CPTAC-5874"/>
<dbReference type="jPOST" id="Q96Q06"/>
<dbReference type="MassIVE" id="Q96Q06"/>
<dbReference type="PaxDb" id="9606-ENSP00000301286"/>
<dbReference type="PeptideAtlas" id="Q96Q06"/>
<dbReference type="Antibodypedia" id="23665">
    <property type="antibodies" value="112 antibodies from 29 providers"/>
</dbReference>
<dbReference type="CPTC" id="Q96Q06">
    <property type="antibodies" value="2 antibodies"/>
</dbReference>
<dbReference type="Ensembl" id="ENST00000301286.5">
    <property type="protein sequence ID" value="ENSP00000301286.4"/>
    <property type="gene ID" value="ENSG00000167676.5"/>
</dbReference>
<dbReference type="GeneID" id="729359"/>
<dbReference type="MANE-Select" id="ENST00000301286.5">
    <property type="protein sequence ID" value="ENSP00000301286.4"/>
    <property type="RefSeq nucleotide sequence ID" value="NM_001367868.2"/>
    <property type="RefSeq protein sequence ID" value="NP_001354797.1"/>
</dbReference>
<dbReference type="UCSC" id="uc002mar.2">
    <property type="organism name" value="human"/>
</dbReference>
<dbReference type="AGR" id="HGNC:29393"/>
<dbReference type="GeneCards" id="PLIN4"/>
<dbReference type="HGNC" id="HGNC:29393">
    <property type="gene designation" value="PLIN4"/>
</dbReference>
<dbReference type="HPA" id="ENSG00000167676">
    <property type="expression patterns" value="Tissue enhanced (adipose tissue, breast, skeletal muscle)"/>
</dbReference>
<dbReference type="MalaCards" id="PLIN4"/>
<dbReference type="MIM" id="601846">
    <property type="type" value="phenotype"/>
</dbReference>
<dbReference type="MIM" id="613247">
    <property type="type" value="gene"/>
</dbReference>
<dbReference type="neXtProt" id="NX_Q96Q06"/>
<dbReference type="OpenTargets" id="ENSG00000167676"/>
<dbReference type="PharmGKB" id="PA165394042"/>
<dbReference type="VEuPathDB" id="HostDB:ENSG00000167676"/>
<dbReference type="eggNOG" id="KOG4744">
    <property type="taxonomic scope" value="Eukaryota"/>
</dbReference>
<dbReference type="GeneTree" id="ENSGT00950000182920"/>
<dbReference type="InParanoid" id="Q96Q06"/>
<dbReference type="OrthoDB" id="6625923at2759"/>
<dbReference type="PAN-GO" id="Q96Q06">
    <property type="GO annotations" value="1 GO annotation based on evolutionary models"/>
</dbReference>
<dbReference type="PhylomeDB" id="Q96Q06"/>
<dbReference type="TreeFam" id="TF328397"/>
<dbReference type="PathwayCommons" id="Q96Q06"/>
<dbReference type="Reactome" id="R-HSA-9841922">
    <property type="pathway name" value="MLL4 and MLL3 complexes regulate expression of PPARG target genes in adipogenesis and hepatic steatosis"/>
</dbReference>
<dbReference type="SignaLink" id="Q96Q06"/>
<dbReference type="BioGRID-ORCS" id="729359">
    <property type="hits" value="10 hits in 1151 CRISPR screens"/>
</dbReference>
<dbReference type="ChiTaRS" id="PLIN4">
    <property type="organism name" value="human"/>
</dbReference>
<dbReference type="GenomeRNAi" id="729359"/>
<dbReference type="Pharos" id="Q96Q06">
    <property type="development level" value="Tbio"/>
</dbReference>
<dbReference type="PRO" id="PR:Q96Q06"/>
<dbReference type="Proteomes" id="UP000005640">
    <property type="component" value="Chromosome 19"/>
</dbReference>
<dbReference type="RNAct" id="Q96Q06">
    <property type="molecule type" value="protein"/>
</dbReference>
<dbReference type="Bgee" id="ENSG00000167676">
    <property type="expression patterns" value="Expressed in subcutaneous adipose tissue and 155 other cell types or tissues"/>
</dbReference>
<dbReference type="ExpressionAtlas" id="Q96Q06">
    <property type="expression patterns" value="baseline and differential"/>
</dbReference>
<dbReference type="GO" id="GO:0005829">
    <property type="term" value="C:cytosol"/>
    <property type="evidence" value="ECO:0000314"/>
    <property type="project" value="HPA"/>
</dbReference>
<dbReference type="GO" id="GO:0005811">
    <property type="term" value="C:lipid droplet"/>
    <property type="evidence" value="ECO:0000314"/>
    <property type="project" value="UniProtKB"/>
</dbReference>
<dbReference type="GO" id="GO:0005886">
    <property type="term" value="C:plasma membrane"/>
    <property type="evidence" value="ECO:0000314"/>
    <property type="project" value="HPA"/>
</dbReference>
<dbReference type="FunFam" id="1.20.120.340:FF:000007">
    <property type="entry name" value="Perilipin 4"/>
    <property type="match status" value="1"/>
</dbReference>
<dbReference type="Gene3D" id="1.20.120.340">
    <property type="entry name" value="Flagellar protein FliS"/>
    <property type="match status" value="1"/>
</dbReference>
<dbReference type="InterPro" id="IPR004279">
    <property type="entry name" value="Perilipin"/>
</dbReference>
<dbReference type="PANTHER" id="PTHR47538">
    <property type="entry name" value="PERILIPIN 4"/>
    <property type="match status" value="1"/>
</dbReference>
<dbReference type="PANTHER" id="PTHR47538:SF1">
    <property type="entry name" value="PERILIPIN-4"/>
    <property type="match status" value="1"/>
</dbReference>
<dbReference type="Pfam" id="PF03036">
    <property type="entry name" value="Perilipin"/>
    <property type="match status" value="1"/>
</dbReference>
<dbReference type="SUPFAM" id="SSF109775">
    <property type="entry name" value="Mannose-6-phosphate receptor binding protein 1 (Tip47), C-terminal domain"/>
    <property type="match status" value="1"/>
</dbReference>
<sequence length="1371" mass="135892">MSAPDEGRRDPPKPKGKTLGSFFGSLPGFSSARNLVANAHSSARARPAADPTGAPAAEAAQPQAQVAAHPEQTAPWTEKELQPSEKMVSGAKDLVCSKMSRAKDAVSSGVASVVDVAKGVVQGGLDTTRSALTGTKEVVSSGVTGAMDMAKGAVQGGLDTSKAVLTGTKDTVSTGLTGAVNVAKGTVQAGVDTTKTVLTGTKDTVTTGVMGAVNLAKGTVQTGVETSKAVLTGTKDAVSTGLTGAVNVARGSIQTGVDTSKTVLTGTKDTVCSGVTGAMNVAKGTIQTGVDTSKTVLTGTKDTVCSGVTGAMNVAKGTIQTGVDTSKTVLTGTKDTVCSGVTGAMNVAKGTIQTGVDTTKTVLTGTKNTVCSGVTGAVNLAKEAIQGGLDTTKSMVMGTKDTMSTGLTGAANVAKGAMQTGLNTTQNIATGTKDTVCSGVTGAMNLARGTIQTGVDTTKIVLTGTKDTVCSGVTGAANVAKGAVQGGLDTTKSVLTGTKDAVSTGLTGAVNVAKGTVQTGVDTTKTVLTGTKDTVCSGVTSAVNVAKGAVQGGLDTTKSVVIGTKDTMSTGLTGAANVAKGAVQTGVDTAKTVLTGTKDTVTTGLVGAVNVAKGTVQTGMDTTKTVLTGTKDTIYSGVTSAVNVAKGAVQTGLKTTQNIATGTKNTFGSGVTSAVNVAKGAAQTGVDTAKTVLTGTKDTVTTGLMGAVNVAKGTVQTSVDTTKTVLTGTKDTVCSGVTGAANVAKGAIQGGLDTTKSVLTGTKDAVSTGLTGAVKLAKGTVQTGMDTTKTVLTGTKDAVCSGVTGAANVAKGAVQMGVDTAKTVLTGTKDTVCSGVTGAANVAKGAVQTGLKTTQNIATGTKNTLGSGVTGAAKVAKGAVQGGLDTTKSVLTGTKDAVSTGLTGAVNLAKGTVQTGVDTSKTVLTGTKDTVCSGVTGAVNVAKGTVQTGVDTAKTVLSGAKDAVTTGVTGAVNVAKGTVQTGVDASKAVLMGTKDTVFSGVTGAMSMAKGAVQGGLDTTKTVLTGTKDAVSAGLMGSGNVATGATHTGLSTFQNWLPSTPATSWGGLTSSRTTDNGGEQTALSPQEAPFSGISTPPDVLSVGPEPAWEAAATTKGLATDVATFTQGAAPGREDTGLLATTHGPEEAPRLAMLQNELEGLGDIFHPMNAEEQAQLAASQPGPKVLSAEQGSYFVRLGDLGPSFRQRAFEHAVSHLQHGQFQARDTLAQLQDCFRLIEKAQQAPEGQPRLDQGSGASAEDAAVQEERDAGVLSRVCGLLRQLHTAYSGLVSSLQGLPAELQQPVGRARHSLCELYGIVASAGSVEELPAERLVQSREGVHQAWQGLEQLLEGLQHNPPLSWLVGPFALPAGGQ</sequence>
<accession>Q96Q06</accession>
<accession>A6NEI2</accession>
<feature type="chain" id="PRO_0000297559" description="Perilipin-4">
    <location>
        <begin position="1"/>
        <end position="1371"/>
    </location>
</feature>
<feature type="repeat" description="1">
    <location>
        <begin position="109"/>
        <end position="141"/>
    </location>
</feature>
<feature type="repeat" description="2">
    <location>
        <begin position="142"/>
        <end position="174"/>
    </location>
</feature>
<feature type="repeat" description="3">
    <location>
        <begin position="175"/>
        <end position="207"/>
    </location>
</feature>
<feature type="repeat" description="4">
    <location>
        <begin position="208"/>
        <end position="240"/>
    </location>
</feature>
<feature type="repeat" description="5">
    <location>
        <begin position="241"/>
        <end position="273"/>
    </location>
</feature>
<feature type="repeat" description="6">
    <location>
        <begin position="274"/>
        <end position="306"/>
    </location>
</feature>
<feature type="repeat" description="7">
    <location>
        <begin position="307"/>
        <end position="339"/>
    </location>
</feature>
<feature type="repeat" description="8">
    <location>
        <begin position="340"/>
        <end position="372"/>
    </location>
</feature>
<feature type="repeat" description="9">
    <location>
        <begin position="373"/>
        <end position="405"/>
    </location>
</feature>
<feature type="repeat" description="10">
    <location>
        <begin position="406"/>
        <end position="438"/>
    </location>
</feature>
<feature type="repeat" description="11">
    <location>
        <begin position="439"/>
        <end position="471"/>
    </location>
</feature>
<feature type="repeat" description="12">
    <location>
        <begin position="472"/>
        <end position="504"/>
    </location>
</feature>
<feature type="repeat" description="13">
    <location>
        <begin position="505"/>
        <end position="537"/>
    </location>
</feature>
<feature type="repeat" description="14">
    <location>
        <begin position="538"/>
        <end position="570"/>
    </location>
</feature>
<feature type="repeat" description="15">
    <location>
        <begin position="571"/>
        <end position="603"/>
    </location>
</feature>
<feature type="repeat" description="16">
    <location>
        <begin position="604"/>
        <end position="636"/>
    </location>
</feature>
<feature type="repeat" description="17">
    <location>
        <begin position="637"/>
        <end position="669"/>
    </location>
</feature>
<feature type="repeat" description="18">
    <location>
        <begin position="670"/>
        <end position="702"/>
    </location>
</feature>
<feature type="repeat" description="19">
    <location>
        <begin position="703"/>
        <end position="735"/>
    </location>
</feature>
<feature type="repeat" description="20">
    <location>
        <begin position="736"/>
        <end position="768"/>
    </location>
</feature>
<feature type="repeat" description="21">
    <location>
        <begin position="769"/>
        <end position="801"/>
    </location>
</feature>
<feature type="repeat" description="22">
    <location>
        <begin position="802"/>
        <end position="834"/>
    </location>
</feature>
<feature type="repeat" description="23">
    <location>
        <begin position="835"/>
        <end position="867"/>
    </location>
</feature>
<feature type="repeat" description="24">
    <location>
        <begin position="868"/>
        <end position="900"/>
    </location>
</feature>
<feature type="repeat" description="25">
    <location>
        <begin position="901"/>
        <end position="933"/>
    </location>
</feature>
<feature type="repeat" description="26">
    <location>
        <begin position="934"/>
        <end position="966"/>
    </location>
</feature>
<feature type="repeat" description="27">
    <location>
        <begin position="967"/>
        <end position="999"/>
    </location>
</feature>
<feature type="region of interest" description="Disordered" evidence="3">
    <location>
        <begin position="1"/>
        <end position="22"/>
    </location>
</feature>
<feature type="region of interest" description="Disordered" evidence="3">
    <location>
        <begin position="37"/>
        <end position="86"/>
    </location>
</feature>
<feature type="region of interest" description="27 X 33 AA approximate tandem repeat">
    <location>
        <begin position="109"/>
        <end position="999"/>
    </location>
</feature>
<feature type="region of interest" description="Disordered" evidence="3">
    <location>
        <begin position="1060"/>
        <end position="1093"/>
    </location>
</feature>
<feature type="region of interest" description="Disordered" evidence="3">
    <location>
        <begin position="1240"/>
        <end position="1260"/>
    </location>
</feature>
<feature type="compositionally biased region" description="Basic and acidic residues" evidence="3">
    <location>
        <begin position="1"/>
        <end position="13"/>
    </location>
</feature>
<feature type="compositionally biased region" description="Low complexity" evidence="3">
    <location>
        <begin position="44"/>
        <end position="72"/>
    </location>
</feature>
<feature type="compositionally biased region" description="Polar residues" evidence="3">
    <location>
        <begin position="1060"/>
        <end position="1083"/>
    </location>
</feature>
<feature type="modified residue" description="Phosphoserine" evidence="2">
    <location>
        <position position="25"/>
    </location>
</feature>
<feature type="modified residue" description="Phosphoserine" evidence="2">
    <location>
        <position position="31"/>
    </location>
</feature>
<feature type="sequence variant" id="VAR_061507" description="In dbSNP:rs4807597." evidence="4">
    <original>V</original>
    <variation>A</variation>
    <location>
        <position position="138"/>
    </location>
</feature>
<feature type="sequence variant" id="VAR_061508" description="In dbSNP:rs55901236.">
    <original>T</original>
    <variation>A</variation>
    <location>
        <position position="435"/>
    </location>
</feature>
<feature type="sequence variant" id="VAR_050483" description="In dbSNP:rs7260518." evidence="4">
    <original>S</original>
    <variation>G</variation>
    <location>
        <position position="673"/>
    </location>
</feature>
<feature type="sequence variant" id="VAR_061509" description="In dbSNP:rs7256387." evidence="4">
    <original>K</original>
    <variation>N</variation>
    <location>
        <position position="775"/>
    </location>
</feature>
<feature type="sequence variant" id="VAR_061510" description="In dbSNP:rs7256712.">
    <original>M</original>
    <variation>T</variation>
    <location>
        <position position="816"/>
    </location>
</feature>
<feature type="sequence variant" id="VAR_061511" description="In dbSNP:rs7255187.">
    <original>A</original>
    <variation>E</variation>
    <location>
        <position position="840"/>
    </location>
</feature>
<feature type="sequence variant" id="VAR_061512" description="In dbSNP:rs7255187.">
    <original>A</original>
    <variation>G</variation>
    <location>
        <position position="840"/>
    </location>
</feature>
<feature type="sequence variant" id="VAR_061513" description="In dbSNP:rs7255187.">
    <original>A</original>
    <variation>V</variation>
    <location>
        <position position="840"/>
    </location>
</feature>
<feature type="sequence variant" id="VAR_061514" description="In dbSNP:rs7259721." evidence="4">
    <original>K</original>
    <variation>N</variation>
    <location>
        <position position="874"/>
    </location>
</feature>
<feature type="sequence variant" id="VAR_034637" description="In dbSNP:rs7251858." evidence="4">
    <original>A</original>
    <variation>T</variation>
    <location>
        <position position="1138"/>
    </location>
</feature>
<feature type="sequence variant" id="VAR_050484" description="In dbSNP:rs7250947.">
    <original>R</original>
    <variation>C</variation>
    <location>
        <position position="1148"/>
    </location>
</feature>
<feature type="sequence conflict" description="In Ref. 2; BAB67774." evidence="10" ref="2">
    <original>G</original>
    <variation>S</variation>
    <location>
        <position position="277"/>
    </location>
</feature>
<feature type="sequence conflict" description="In Ref. 2; BAB67774." evidence="10" ref="2">
    <original>A</original>
    <variation>V</variation>
    <location>
        <position position="682"/>
    </location>
</feature>
<feature type="sequence conflict" description="In Ref. 2; BAB67774." evidence="10" ref="2">
    <original>I</original>
    <variation>V</variation>
    <location>
        <position position="748"/>
    </location>
</feature>
<feature type="sequence conflict" description="In Ref. 2; BAB67774." evidence="10" ref="2">
    <original>Q</original>
    <variation>VQTGVDTAKTVLTGTKDTVCSGVTGAVNVAKGAVQTGLKTTQNIATGTKNTLGSGVTGAANVAKGAVQ</variation>
    <location>
        <position position="749"/>
    </location>
</feature>
<feature type="sequence conflict" description="In Ref. 2; BAB67774." evidence="10" ref="2">
    <original>CSGVTGAA</original>
    <variation>TTGLMGAV</variation>
    <location>
        <begin position="833"/>
        <end position="840"/>
    </location>
</feature>
<feature type="sequence conflict" description="In Ref. 2; BAB67774." evidence="10" ref="2">
    <original>A</original>
    <variation>T</variation>
    <location>
        <position position="846"/>
    </location>
</feature>
<feature type="sequence conflict" description="In Ref. 2; BAB67774." evidence="10" ref="2">
    <original>GLKTTQNIA</original>
    <variation>SVDTTKTVL</variation>
    <location>
        <begin position="850"/>
        <end position="858"/>
    </location>
</feature>
<feature type="sequence conflict" description="In Ref. 2; BAB67774." evidence="10" ref="2">
    <original>NTLG</original>
    <variation>DTVC</variation>
    <location>
        <begin position="863"/>
        <end position="866"/>
    </location>
</feature>
<feature type="sequence conflict" description="In Ref. 2; BAB67774." evidence="10" ref="2">
    <original>A</original>
    <variation>T</variation>
    <location>
        <position position="897"/>
    </location>
</feature>